<reference key="1">
    <citation type="submission" date="2008-03" db="EMBL/GenBank/DDBJ databases">
        <title>Guizotia abyssinica chloroplast sequenced using Solexa.</title>
        <authorList>
            <person name="Kane N.C."/>
            <person name="Dempewolf H."/>
            <person name="Stewart M.L."/>
            <person name="Cronk Q."/>
            <person name="Rieseberrg L.H."/>
        </authorList>
    </citation>
    <scope>NUCLEOTIDE SEQUENCE [LARGE SCALE GENOMIC DNA]</scope>
    <source>
        <strain>cv. PI 508077</strain>
    </source>
</reference>
<proteinExistence type="inferred from homology"/>
<comment type="function">
    <text evidence="1">Component of the cytochrome b6-f complex, which mediates electron transfer between photosystem II (PSII) and photosystem I (PSI), cyclic electron flow around PSI, and state transitions.</text>
</comment>
<comment type="subunit">
    <text evidence="1">The 4 large subunits of the cytochrome b6-f complex are cytochrome b6, subunit IV (17 kDa polypeptide, PetD), cytochrome f and the Rieske protein, while the 4 small subunits are PetG, PetL, PetM and PetN. The complex functions as a dimer.</text>
</comment>
<comment type="subcellular location">
    <subcellularLocation>
        <location evidence="1">Plastid</location>
        <location evidence="1">Chloroplast thylakoid membrane</location>
        <topology evidence="1">Single-pass membrane protein</topology>
    </subcellularLocation>
</comment>
<comment type="similarity">
    <text evidence="1">Belongs to the PetN family.</text>
</comment>
<dbReference type="EMBL" id="EU549769">
    <property type="protein sequence ID" value="ACB86512.1"/>
    <property type="molecule type" value="Genomic_DNA"/>
</dbReference>
<dbReference type="RefSeq" id="YP_001837345.1">
    <property type="nucleotide sequence ID" value="NC_010601.1"/>
</dbReference>
<dbReference type="SMR" id="B2LMH8"/>
<dbReference type="GeneID" id="6219163"/>
<dbReference type="GO" id="GO:0009535">
    <property type="term" value="C:chloroplast thylakoid membrane"/>
    <property type="evidence" value="ECO:0007669"/>
    <property type="project" value="UniProtKB-SubCell"/>
</dbReference>
<dbReference type="GO" id="GO:0009512">
    <property type="term" value="C:cytochrome b6f complex"/>
    <property type="evidence" value="ECO:0007669"/>
    <property type="project" value="InterPro"/>
</dbReference>
<dbReference type="GO" id="GO:0045158">
    <property type="term" value="F:electron transporter, transferring electrons within cytochrome b6/f complex of photosystem II activity"/>
    <property type="evidence" value="ECO:0007669"/>
    <property type="project" value="InterPro"/>
</dbReference>
<dbReference type="GO" id="GO:0017004">
    <property type="term" value="P:cytochrome complex assembly"/>
    <property type="evidence" value="ECO:0007669"/>
    <property type="project" value="UniProtKB-UniRule"/>
</dbReference>
<dbReference type="GO" id="GO:0015979">
    <property type="term" value="P:photosynthesis"/>
    <property type="evidence" value="ECO:0007669"/>
    <property type="project" value="UniProtKB-KW"/>
</dbReference>
<dbReference type="HAMAP" id="MF_00395">
    <property type="entry name" value="Cytb6_f_PetN"/>
    <property type="match status" value="1"/>
</dbReference>
<dbReference type="InterPro" id="IPR036143">
    <property type="entry name" value="Cytochr_b6-f_cplx_su8_sf"/>
</dbReference>
<dbReference type="InterPro" id="IPR005497">
    <property type="entry name" value="Cytochrome_b6-f_cplx_su8"/>
</dbReference>
<dbReference type="Pfam" id="PF03742">
    <property type="entry name" value="PetN"/>
    <property type="match status" value="1"/>
</dbReference>
<dbReference type="SUPFAM" id="SSF103451">
    <property type="entry name" value="PetN subunit of the cytochrome b6f complex"/>
    <property type="match status" value="1"/>
</dbReference>
<keyword id="KW-0150">Chloroplast</keyword>
<keyword id="KW-0249">Electron transport</keyword>
<keyword id="KW-0472">Membrane</keyword>
<keyword id="KW-0602">Photosynthesis</keyword>
<keyword id="KW-0934">Plastid</keyword>
<keyword id="KW-0793">Thylakoid</keyword>
<keyword id="KW-0812">Transmembrane</keyword>
<keyword id="KW-1133">Transmembrane helix</keyword>
<keyword id="KW-0813">Transport</keyword>
<gene>
    <name evidence="1" type="primary">petN</name>
    <name type="ordered locus">GuabCp006</name>
</gene>
<name>PETN_GUIAB</name>
<organism>
    <name type="scientific">Guizotia abyssinica</name>
    <name type="common">Niger</name>
    <name type="synonym">Ramtilla</name>
    <dbReference type="NCBI Taxonomy" id="4230"/>
    <lineage>
        <taxon>Eukaryota</taxon>
        <taxon>Viridiplantae</taxon>
        <taxon>Streptophyta</taxon>
        <taxon>Embryophyta</taxon>
        <taxon>Tracheophyta</taxon>
        <taxon>Spermatophyta</taxon>
        <taxon>Magnoliopsida</taxon>
        <taxon>eudicotyledons</taxon>
        <taxon>Gunneridae</taxon>
        <taxon>Pentapetalae</taxon>
        <taxon>asterids</taxon>
        <taxon>campanulids</taxon>
        <taxon>Asterales</taxon>
        <taxon>Asteraceae</taxon>
        <taxon>Asteroideae</taxon>
        <taxon>Heliantheae alliance</taxon>
        <taxon>Millerieae</taxon>
        <taxon>Guizotia</taxon>
    </lineage>
</organism>
<feature type="chain" id="PRO_0000355441" description="Cytochrome b6-f complex subunit 8">
    <location>
        <begin position="1"/>
        <end position="29"/>
    </location>
</feature>
<feature type="transmembrane region" description="Helical" evidence="1">
    <location>
        <begin position="3"/>
        <end position="23"/>
    </location>
</feature>
<geneLocation type="chloroplast"/>
<protein>
    <recommendedName>
        <fullName evidence="1">Cytochrome b6-f complex subunit 8</fullName>
    </recommendedName>
    <alternativeName>
        <fullName evidence="1">Cytochrome b6-f complex subunit PetN</fullName>
    </alternativeName>
    <alternativeName>
        <fullName evidence="1">Cytochrome b6-f complex subunit VIII</fullName>
    </alternativeName>
</protein>
<evidence type="ECO:0000255" key="1">
    <source>
        <dbReference type="HAMAP-Rule" id="MF_00395"/>
    </source>
</evidence>
<sequence length="29" mass="3170">MDIVSLAWAALMVVFTFSLSLVVWGRSGL</sequence>
<accession>B2LMH8</accession>